<sequence>MINLKELKILHTSDWHLGVTSWTSSRPVDRREELKKALDKVVEEAEKREVDLILLTGDLLHSRNNPSVVALHDLLDYLKRMMRTAPVVVLPGNHDWKGLKLFGNFVTSISSDITFVMSFEPVDVEAKRGQKVRILPFPYPDESEALRKNEGDFRFFLESRLNKLYEEALKKEDFAIFMGHFTVEGLAGYAGIEQGREIIINRALIPSVVDYAALGHIHSFREIQKQPLTIYPGSLIRIDFGEEADEKGAVFVELKRGEPPRYERIDASPLPLKTLYYKKIDTSALKSIRDFCRNFPGYVRVVYEEDSGILPDLMGEIDNLVKIERKSRREIEEVLRESPEEFKEELDKLDYFELFKEYLKKREENHEKLLKILDELLDEVKKSEA</sequence>
<accession>Q9X1X0</accession>
<reference key="1">
    <citation type="journal article" date="1999" name="Nature">
        <title>Evidence for lateral gene transfer between Archaea and Bacteria from genome sequence of Thermotoga maritima.</title>
        <authorList>
            <person name="Nelson K.E."/>
            <person name="Clayton R.A."/>
            <person name="Gill S.R."/>
            <person name="Gwinn M.L."/>
            <person name="Dodson R.J."/>
            <person name="Haft D.H."/>
            <person name="Hickey E.K."/>
            <person name="Peterson J.D."/>
            <person name="Nelson W.C."/>
            <person name="Ketchum K.A."/>
            <person name="McDonald L.A."/>
            <person name="Utterback T.R."/>
            <person name="Malek J.A."/>
            <person name="Linher K.D."/>
            <person name="Garrett M.M."/>
            <person name="Stewart A.M."/>
            <person name="Cotton M.D."/>
            <person name="Pratt M.S."/>
            <person name="Phillips C.A."/>
            <person name="Richardson D.L."/>
            <person name="Heidelberg J.F."/>
            <person name="Sutton G.G."/>
            <person name="Fleischmann R.D."/>
            <person name="Eisen J.A."/>
            <person name="White O."/>
            <person name="Salzberg S.L."/>
            <person name="Smith H.O."/>
            <person name="Venter J.C."/>
            <person name="Fraser C.M."/>
        </authorList>
    </citation>
    <scope>NUCLEOTIDE SEQUENCE [LARGE SCALE GENOMIC DNA]</scope>
    <source>
        <strain>ATCC 43589 / DSM 3109 / JCM 10099 / NBRC 100826 / MSB8</strain>
    </source>
</reference>
<reference evidence="11" key="2">
    <citation type="journal article" date="2010" name="J. Mol. Biol.">
        <title>Crystal structure of the first eubacterial Mre11 nuclease reveals novel features that may discriminate substrates during DNA repair.</title>
        <authorList>
            <person name="Das D."/>
            <person name="Moiani D."/>
            <person name="Axelrod H.L."/>
            <person name="Miller M.D."/>
            <person name="McMullan D."/>
            <person name="Jin K.K."/>
            <person name="Abdubek P."/>
            <person name="Astakhova T."/>
            <person name="Burra P."/>
            <person name="Carlton D."/>
            <person name="Chiu H.J."/>
            <person name="Clayton T."/>
            <person name="Deller M.C."/>
            <person name="Duan L."/>
            <person name="Ernst D."/>
            <person name="Feuerhelm J."/>
            <person name="Grant J.C."/>
            <person name="Grzechnik A."/>
            <person name="Grzechnik S.K."/>
            <person name="Han G.W."/>
            <person name="Jaroszewski L."/>
            <person name="Klock H.E."/>
            <person name="Knuth M.W."/>
            <person name="Kozbial P."/>
            <person name="Krishna S.S."/>
            <person name="Kumar A."/>
            <person name="Marciano D."/>
            <person name="Morse A.T."/>
            <person name="Nigoghossian E."/>
            <person name="Okach L."/>
            <person name="Paulsen J."/>
            <person name="Reyes R."/>
            <person name="Rife C.L."/>
            <person name="Sefcovic N."/>
            <person name="Tien H.J."/>
            <person name="Trame C.B."/>
            <person name="van den Bedem H."/>
            <person name="Weekes D."/>
            <person name="Xu Q."/>
            <person name="Hodgson K.O."/>
            <person name="Wooley J."/>
            <person name="Elsliger M.A."/>
            <person name="Deacon A.M."/>
            <person name="Godzik A."/>
            <person name="Lesley S.A."/>
            <person name="Tainer J.A."/>
            <person name="Wilson I.A."/>
        </authorList>
    </citation>
    <scope>X-RAY CRYSTALLOGRAPHY (2.20 ANGSTROMS) OF 1-324</scope>
    <scope>FUNCTION</scope>
    <scope>SUBUNIT</scope>
    <scope>MUTAGENESIS OF HIS-180 AND HIS-216</scope>
</reference>
<reference evidence="12 13" key="3">
    <citation type="journal article" date="2011" name="Cell">
        <title>The Mre11:Rad50 structure shows an ATP-dependent molecular clamp in DNA double-strand break repair.</title>
        <authorList>
            <person name="Lammens K."/>
            <person name="Bemeleit D.J."/>
            <person name="Moeckel C."/>
            <person name="Clausing E."/>
            <person name="Schele A."/>
            <person name="Hartung S."/>
            <person name="Schiller C.B."/>
            <person name="Lucas M."/>
            <person name="Angermueller C."/>
            <person name="Soeding J."/>
            <person name="Straesser K."/>
            <person name="Hopfner K.P."/>
        </authorList>
    </citation>
    <scope>X-RAY CRYSTALLOGRAPHY (1.90 ANGSTROMS) OF 343-385 IN COMPLEX WITH RAD50</scope>
    <scope>FUNCTION</scope>
    <scope>ACTIVITY REGULATION</scope>
    <scope>INTERACTION WITH RAD50</scope>
</reference>
<reference evidence="14 15" key="4">
    <citation type="journal article" date="2012" name="Nucleic Acids Res.">
        <title>ATP driven structural changes of the bacterial Mre11:Rad50 catalytic head complex.</title>
        <authorList>
            <person name="Moeckel C."/>
            <person name="Lammens K."/>
            <person name="Schele A."/>
            <person name="Hopfner K.P."/>
        </authorList>
    </citation>
    <scope>X-RAY CRYSTALLOGRAPHY (2.61 ANGSTROMS) OF 8-385 IN COMPLEX WITH MANGANESE AND RAD50</scope>
    <scope>COFACTOR</scope>
    <scope>FUNCTION</scope>
    <scope>ACTIVITY REGULATION</scope>
    <scope>INTERACTION WITH RAD50</scope>
</reference>
<reference evidence="21" key="5">
    <citation type="journal article" date="2014" name="EMBO J.">
        <title>Structure of the Rad50 DNA double-strand break repair protein in complex with DNA.</title>
        <authorList>
            <person name="Rojowska A."/>
            <person name="Lammens K."/>
            <person name="Seifert F.U."/>
            <person name="Direnberger C."/>
            <person name="Feldmann H."/>
            <person name="Hopfner K.P."/>
        </authorList>
    </citation>
    <scope>X-RAY CRYSTALLOGRAPHY (2.70 ANGSTROMS) OF 347-383</scope>
</reference>
<reference evidence="16 17" key="6">
    <citation type="journal article" date="2014" name="Mol. Cell">
        <title>DNA double-strand break repair pathway choice is directed by distinct MRE11 nuclease activities.</title>
        <authorList>
            <person name="Shibata A."/>
            <person name="Moiani D."/>
            <person name="Arvai A.S."/>
            <person name="Perry J."/>
            <person name="Harding S.M."/>
            <person name="Genois M.M."/>
            <person name="Maity R."/>
            <person name="van Rossum-Fikkert S."/>
            <person name="Kertokalio A."/>
            <person name="Romoli F."/>
            <person name="Ismail A."/>
            <person name="Ismalaj E."/>
            <person name="Petricci E."/>
            <person name="Neale M.J."/>
            <person name="Bristow R.G."/>
            <person name="Masson J.Y."/>
            <person name="Wyman C."/>
            <person name="Jeggo P.A."/>
            <person name="Tainer J.A."/>
        </authorList>
    </citation>
    <scope>X-RAY CRYSTALLOGRAPHY (1.90 ANGSTROMS) OF 2-324 IN COMPLEX WITH MANGANESE</scope>
    <scope>COFACTOR</scope>
    <scope>FUNCTION</scope>
    <scope>ACTIVITY REGULATION</scope>
</reference>
<feature type="chain" id="PRO_0000460315" description="DNA double-strand break repair protein Mre11">
    <location>
        <begin position="1"/>
        <end position="385"/>
    </location>
</feature>
<feature type="active site" description="Proton donor" evidence="1 2">
    <location>
        <position position="94"/>
    </location>
</feature>
<feature type="binding site" evidence="5 6 14 15 16 17 18 19 20">
    <location>
        <position position="14"/>
    </location>
    <ligand>
        <name>Mn(2+)</name>
        <dbReference type="ChEBI" id="CHEBI:29035"/>
        <label>1</label>
    </ligand>
</feature>
<feature type="binding site" evidence="5 6 14 15 16 17 18 19 20">
    <location>
        <position position="14"/>
    </location>
    <ligand>
        <name>Mn(2+)</name>
        <dbReference type="ChEBI" id="CHEBI:29035"/>
        <label>2</label>
    </ligand>
</feature>
<feature type="binding site" evidence="5 6 14 15 16 17 18 19 20">
    <location>
        <position position="16"/>
    </location>
    <ligand>
        <name>Mn(2+)</name>
        <dbReference type="ChEBI" id="CHEBI:29035"/>
        <label>1</label>
    </ligand>
</feature>
<feature type="binding site" evidence="5 6 14 15 16 17 18 19 20">
    <location>
        <position position="58"/>
    </location>
    <ligand>
        <name>Mn(2+)</name>
        <dbReference type="ChEBI" id="CHEBI:29035"/>
        <label>1</label>
    </ligand>
</feature>
<feature type="binding site" evidence="5 6 14 15 16 17 18 19 20">
    <location>
        <position position="58"/>
    </location>
    <ligand>
        <name>Mn(2+)</name>
        <dbReference type="ChEBI" id="CHEBI:29035"/>
        <label>2</label>
    </ligand>
</feature>
<feature type="binding site" evidence="5 6 14 15 16 17 19">
    <location>
        <position position="180"/>
    </location>
    <ligand>
        <name>Mn(2+)</name>
        <dbReference type="ChEBI" id="CHEBI:29035"/>
        <label>2</label>
    </ligand>
</feature>
<feature type="binding site" evidence="5 6 14 15 16 17 18 19 20">
    <location>
        <position position="216"/>
    </location>
    <ligand>
        <name>Mn(2+)</name>
        <dbReference type="ChEBI" id="CHEBI:29035"/>
        <label>2</label>
    </ligand>
</feature>
<feature type="binding site" evidence="5 6 16">
    <location>
        <position position="218"/>
    </location>
    <ligand>
        <name>Mn(2+)</name>
        <dbReference type="ChEBI" id="CHEBI:29035"/>
        <label>1</label>
    </ligand>
</feature>
<feature type="mutagenesis site" description="Decreased endonuclease activity; when associated with S-216." evidence="3">
    <original>H</original>
    <variation>S</variation>
    <location>
        <position position="180"/>
    </location>
</feature>
<feature type="mutagenesis site" description="Decreased endonuclease activity; when associated with S-180." evidence="3">
    <original>H</original>
    <variation>S</variation>
    <location>
        <position position="216"/>
    </location>
</feature>
<feature type="strand" evidence="26">
    <location>
        <begin position="6"/>
        <end position="12"/>
    </location>
</feature>
<feature type="turn" evidence="26">
    <location>
        <begin position="23"/>
        <end position="25"/>
    </location>
</feature>
<feature type="helix" evidence="26">
    <location>
        <begin position="31"/>
        <end position="48"/>
    </location>
</feature>
<feature type="strand" evidence="26">
    <location>
        <begin position="51"/>
        <end position="55"/>
    </location>
</feature>
<feature type="strand" evidence="25">
    <location>
        <begin position="59"/>
        <end position="61"/>
    </location>
</feature>
<feature type="strand" evidence="23">
    <location>
        <begin position="63"/>
        <end position="65"/>
    </location>
</feature>
<feature type="helix" evidence="26">
    <location>
        <begin position="68"/>
        <end position="84"/>
    </location>
</feature>
<feature type="strand" evidence="26">
    <location>
        <begin position="87"/>
        <end position="89"/>
    </location>
</feature>
<feature type="helix" evidence="26">
    <location>
        <begin position="99"/>
        <end position="109"/>
    </location>
</feature>
<feature type="strand" evidence="26">
    <location>
        <begin position="113"/>
        <end position="115"/>
    </location>
</feature>
<feature type="strand" evidence="24">
    <location>
        <begin position="118"/>
        <end position="120"/>
    </location>
</feature>
<feature type="strand" evidence="26">
    <location>
        <begin position="122"/>
        <end position="125"/>
    </location>
</feature>
<feature type="strand" evidence="26">
    <location>
        <begin position="131"/>
        <end position="137"/>
    </location>
</feature>
<feature type="turn" evidence="26">
    <location>
        <begin position="143"/>
        <end position="146"/>
    </location>
</feature>
<feature type="helix" evidence="26">
    <location>
        <begin position="150"/>
        <end position="169"/>
    </location>
</feature>
<feature type="strand" evidence="26">
    <location>
        <begin position="172"/>
        <end position="183"/>
    </location>
</feature>
<feature type="strand" evidence="25">
    <location>
        <begin position="187"/>
        <end position="189"/>
    </location>
</feature>
<feature type="strand" evidence="24">
    <location>
        <begin position="193"/>
        <end position="195"/>
    </location>
</feature>
<feature type="helix" evidence="26">
    <location>
        <begin position="202"/>
        <end position="204"/>
    </location>
</feature>
<feature type="strand" evidence="26">
    <location>
        <begin position="209"/>
        <end position="216"/>
    </location>
</feature>
<feature type="strand" evidence="26">
    <location>
        <begin position="221"/>
        <end position="224"/>
    </location>
</feature>
<feature type="turn" evidence="26">
    <location>
        <begin position="225"/>
        <end position="228"/>
    </location>
</feature>
<feature type="strand" evidence="26">
    <location>
        <begin position="229"/>
        <end position="231"/>
    </location>
</feature>
<feature type="helix" evidence="25">
    <location>
        <begin position="240"/>
        <end position="242"/>
    </location>
</feature>
<feature type="strand" evidence="23">
    <location>
        <begin position="243"/>
        <end position="245"/>
    </location>
</feature>
<feature type="strand" evidence="26">
    <location>
        <begin position="248"/>
        <end position="255"/>
    </location>
</feature>
<feature type="strand" evidence="23">
    <location>
        <begin position="256"/>
        <end position="258"/>
    </location>
</feature>
<feature type="strand" evidence="26">
    <location>
        <begin position="261"/>
        <end position="266"/>
    </location>
</feature>
<feature type="strand" evidence="26">
    <location>
        <begin position="272"/>
        <end position="279"/>
    </location>
</feature>
<feature type="helix" evidence="26">
    <location>
        <begin position="282"/>
        <end position="293"/>
    </location>
</feature>
<feature type="strand" evidence="26">
    <location>
        <begin position="296"/>
        <end position="303"/>
    </location>
</feature>
<feature type="helix" evidence="26">
    <location>
        <begin position="313"/>
        <end position="316"/>
    </location>
</feature>
<feature type="strand" evidence="26">
    <location>
        <begin position="320"/>
        <end position="324"/>
    </location>
</feature>
<feature type="helix" evidence="23">
    <location>
        <begin position="329"/>
        <end position="336"/>
    </location>
</feature>
<feature type="helix" evidence="23">
    <location>
        <begin position="339"/>
        <end position="347"/>
    </location>
</feature>
<feature type="helix" evidence="22">
    <location>
        <begin position="351"/>
        <end position="362"/>
    </location>
</feature>
<feature type="turn" evidence="23">
    <location>
        <begin position="363"/>
        <end position="365"/>
    </location>
</feature>
<feature type="helix" evidence="22">
    <location>
        <begin position="366"/>
        <end position="382"/>
    </location>
</feature>
<proteinExistence type="evidence at protein level"/>
<comment type="function">
    <text evidence="1 4 5 6 9">Part of the Rad50/Mre11 complex, which is involved in the early steps of DNA double-strand break (DSB) repair (PubMed:21458667, PubMed:21937514, PubMed:24316220). The complex may facilitate opening of the processed DNA ends to aid in the recruitment of HerA and NurA (By similarity). Mre11 binds to DSB ends and has both double-stranded 3'-5' exonuclease activity and single-stranded endonuclease activity (Probable) (PubMed:20122942, PubMed:21458667, PubMed:24316220).</text>
</comment>
<comment type="cofactor">
    <cofactor evidence="5 6">
        <name>Mn(2+)</name>
        <dbReference type="ChEBI" id="CHEBI:29035"/>
    </cofactor>
</comment>
<comment type="activity regulation">
    <text evidence="4 5 6">Nuclease activity is regulated by Rad50 (PubMed:21458667, PubMed:21937514). The mirin-derivative PFM39, specifically inhibits the 3'-5' exonuclease activity (PubMed:24316220). The N-alkylated mirin-derivatives PFM03 and PFM01 specifically inhibit the endonuclease activity (PubMed:24316220).</text>
</comment>
<comment type="subunit">
    <text evidence="1 3 4 5">Homodimer (PubMed:20122942, PubMed:21458667, PubMed:21937514). Forms a heterotetramer composed of two Mre11 subunits and two Rad50 subunits (PubMed:21458667, PubMed:21937514). Homodimerization facilitates DNA binding (By similarity).</text>
</comment>
<comment type="interaction">
    <interactant intactId="EBI-3954204">
        <id>Q9X1X0</id>
    </interactant>
    <interactant intactId="EBI-3954207">
        <id>Q9X1X1</id>
        <label>rad50</label>
    </interactant>
    <organismsDiffer>false</organismsDiffer>
    <experiments>3</experiments>
</comment>
<comment type="similarity">
    <text evidence="8">Belongs to the MRE11/RAD32 family.</text>
</comment>
<name>MRE11_THEMA</name>
<protein>
    <recommendedName>
        <fullName evidence="8">DNA double-strand break repair protein Mre11</fullName>
        <shortName evidence="7">TmMre11</shortName>
        <ecNumber evidence="4 9">3.1.-.-</ecNumber>
    </recommendedName>
</protein>
<organism>
    <name type="scientific">Thermotoga maritima (strain ATCC 43589 / DSM 3109 / JCM 10099 / NBRC 100826 / MSB8)</name>
    <dbReference type="NCBI Taxonomy" id="243274"/>
    <lineage>
        <taxon>Bacteria</taxon>
        <taxon>Thermotogati</taxon>
        <taxon>Thermotogota</taxon>
        <taxon>Thermotogae</taxon>
        <taxon>Thermotogales</taxon>
        <taxon>Thermotogaceae</taxon>
        <taxon>Thermotoga</taxon>
    </lineage>
</organism>
<keyword id="KW-0002">3D-structure</keyword>
<keyword id="KW-0233">DNA recombination</keyword>
<keyword id="KW-0235">DNA replication</keyword>
<keyword id="KW-0255">Endonuclease</keyword>
<keyword id="KW-0269">Exonuclease</keyword>
<keyword id="KW-0378">Hydrolase</keyword>
<keyword id="KW-0479">Metal-binding</keyword>
<keyword id="KW-0540">Nuclease</keyword>
<keyword id="KW-1185">Reference proteome</keyword>
<dbReference type="EC" id="3.1.-.-" evidence="4 9"/>
<dbReference type="EMBL" id="AE000512">
    <property type="protein sequence ID" value="AAD36702.1"/>
    <property type="molecule type" value="Genomic_DNA"/>
</dbReference>
<dbReference type="PIR" id="C72230">
    <property type="entry name" value="C72230"/>
</dbReference>
<dbReference type="RefSeq" id="NP_229435.1">
    <property type="nucleotide sequence ID" value="NC_000853.1"/>
</dbReference>
<dbReference type="RefSeq" id="WP_010865373.1">
    <property type="nucleotide sequence ID" value="NC_000853.1"/>
</dbReference>
<dbReference type="PDB" id="2Q8U">
    <property type="method" value="X-ray"/>
    <property type="resolution" value="2.20 A"/>
    <property type="chains" value="A/B=1-324"/>
</dbReference>
<dbReference type="PDB" id="3QF7">
    <property type="method" value="X-ray"/>
    <property type="resolution" value="1.90 A"/>
    <property type="chains" value="C/D=343-385"/>
</dbReference>
<dbReference type="PDB" id="3QG5">
    <property type="method" value="X-ray"/>
    <property type="resolution" value="3.40 A"/>
    <property type="chains" value="C/D=7-385"/>
</dbReference>
<dbReference type="PDB" id="3THN">
    <property type="method" value="X-ray"/>
    <property type="resolution" value="2.81 A"/>
    <property type="chains" value="A=7-325"/>
</dbReference>
<dbReference type="PDB" id="3THO">
    <property type="method" value="X-ray"/>
    <property type="resolution" value="2.61 A"/>
    <property type="chains" value="B=7-385"/>
</dbReference>
<dbReference type="PDB" id="4NZV">
    <property type="method" value="X-ray"/>
    <property type="resolution" value="1.90 A"/>
    <property type="chains" value="A/B=2-324"/>
</dbReference>
<dbReference type="PDB" id="4O24">
    <property type="method" value="X-ray"/>
    <property type="resolution" value="2.30 A"/>
    <property type="chains" value="A/B=2-324"/>
</dbReference>
<dbReference type="PDB" id="4O43">
    <property type="method" value="X-ray"/>
    <property type="resolution" value="2.40 A"/>
    <property type="chains" value="A/B=2-324"/>
</dbReference>
<dbReference type="PDB" id="4O4K">
    <property type="method" value="X-ray"/>
    <property type="resolution" value="2.10 A"/>
    <property type="chains" value="A/B=2-324"/>
</dbReference>
<dbReference type="PDB" id="4O5G">
    <property type="method" value="X-ray"/>
    <property type="resolution" value="2.30 A"/>
    <property type="chains" value="A/B=2-324"/>
</dbReference>
<dbReference type="PDB" id="4W9M">
    <property type="method" value="X-ray"/>
    <property type="resolution" value="2.70 A"/>
    <property type="chains" value="D/F/J/L=347-383"/>
</dbReference>
<dbReference type="PDB" id="6ASC">
    <property type="method" value="X-ray"/>
    <property type="resolution" value="2.15 A"/>
    <property type="chains" value="A/B=2-324"/>
</dbReference>
<dbReference type="PDB" id="6X1Y">
    <property type="method" value="X-ray"/>
    <property type="resolution" value="2.35 A"/>
    <property type="chains" value="A/B=2-324"/>
</dbReference>
<dbReference type="PDB" id="6X1Z">
    <property type="method" value="X-ray"/>
    <property type="resolution" value="1.90 A"/>
    <property type="chains" value="A/B=2-324"/>
</dbReference>
<dbReference type="PDBsum" id="2Q8U"/>
<dbReference type="PDBsum" id="3QF7"/>
<dbReference type="PDBsum" id="3QG5"/>
<dbReference type="PDBsum" id="3THN"/>
<dbReference type="PDBsum" id="3THO"/>
<dbReference type="PDBsum" id="4NZV"/>
<dbReference type="PDBsum" id="4O24"/>
<dbReference type="PDBsum" id="4O43"/>
<dbReference type="PDBsum" id="4O4K"/>
<dbReference type="PDBsum" id="4O5G"/>
<dbReference type="PDBsum" id="4W9M"/>
<dbReference type="PDBsum" id="6ASC"/>
<dbReference type="PDBsum" id="6X1Y"/>
<dbReference type="PDBsum" id="6X1Z"/>
<dbReference type="SMR" id="Q9X1X0"/>
<dbReference type="FunCoup" id="Q9X1X0">
    <property type="interactions" value="25"/>
</dbReference>
<dbReference type="IntAct" id="Q9X1X0">
    <property type="interactions" value="1"/>
</dbReference>
<dbReference type="PaxDb" id="243274-THEMA_06070"/>
<dbReference type="EnsemblBacteria" id="AAD36702">
    <property type="protein sequence ID" value="AAD36702"/>
    <property type="gene ID" value="TM_1635"/>
</dbReference>
<dbReference type="KEGG" id="tma:TM1635"/>
<dbReference type="KEGG" id="tmi:THEMA_06070"/>
<dbReference type="PATRIC" id="fig|243274.18.peg.1174"/>
<dbReference type="InParanoid" id="Q9X1X0"/>
<dbReference type="OrthoDB" id="9773856at2"/>
<dbReference type="EvolutionaryTrace" id="Q9X1X0"/>
<dbReference type="Proteomes" id="UP000008183">
    <property type="component" value="Chromosome"/>
</dbReference>
<dbReference type="GO" id="GO:0008408">
    <property type="term" value="F:3'-5' exonuclease activity"/>
    <property type="evidence" value="ECO:0007669"/>
    <property type="project" value="InterPro"/>
</dbReference>
<dbReference type="GO" id="GO:0003677">
    <property type="term" value="F:DNA binding"/>
    <property type="evidence" value="ECO:0000315"/>
    <property type="project" value="CACAO"/>
</dbReference>
<dbReference type="GO" id="GO:0004520">
    <property type="term" value="F:DNA endonuclease activity"/>
    <property type="evidence" value="ECO:0000314"/>
    <property type="project" value="UniProtKB"/>
</dbReference>
<dbReference type="GO" id="GO:0004529">
    <property type="term" value="F:DNA exonuclease activity"/>
    <property type="evidence" value="ECO:0000314"/>
    <property type="project" value="UniProtKB"/>
</dbReference>
<dbReference type="GO" id="GO:0046872">
    <property type="term" value="F:metal ion binding"/>
    <property type="evidence" value="ECO:0007669"/>
    <property type="project" value="UniProtKB-KW"/>
</dbReference>
<dbReference type="GO" id="GO:0006310">
    <property type="term" value="P:DNA recombination"/>
    <property type="evidence" value="ECO:0007669"/>
    <property type="project" value="UniProtKB-KW"/>
</dbReference>
<dbReference type="GO" id="GO:0006281">
    <property type="term" value="P:DNA repair"/>
    <property type="evidence" value="ECO:0000318"/>
    <property type="project" value="GO_Central"/>
</dbReference>
<dbReference type="GO" id="GO:0006260">
    <property type="term" value="P:DNA replication"/>
    <property type="evidence" value="ECO:0007669"/>
    <property type="project" value="UniProtKB-KW"/>
</dbReference>
<dbReference type="GO" id="GO:0006302">
    <property type="term" value="P:double-strand break repair"/>
    <property type="evidence" value="ECO:0000314"/>
    <property type="project" value="UniProtKB"/>
</dbReference>
<dbReference type="CDD" id="cd00840">
    <property type="entry name" value="MPP_Mre11_N"/>
    <property type="match status" value="1"/>
</dbReference>
<dbReference type="FunFam" id="3.60.21.10:FF:000238">
    <property type="entry name" value="DNA double-strand break repair protein Mre11"/>
    <property type="match status" value="1"/>
</dbReference>
<dbReference type="Gene3D" id="3.60.21.10">
    <property type="match status" value="1"/>
</dbReference>
<dbReference type="Gene3D" id="6.10.140.980">
    <property type="match status" value="1"/>
</dbReference>
<dbReference type="Gene3D" id="3.30.160.210">
    <property type="entry name" value="DNA double-strand break repair nuclease"/>
    <property type="match status" value="1"/>
</dbReference>
<dbReference type="InterPro" id="IPR004843">
    <property type="entry name" value="Calcineurin-like_PHP_ApaH"/>
</dbReference>
<dbReference type="InterPro" id="IPR050535">
    <property type="entry name" value="DNA_Repair-Maintenance_Comp"/>
</dbReference>
<dbReference type="InterPro" id="IPR029052">
    <property type="entry name" value="Metallo-depent_PP-like"/>
</dbReference>
<dbReference type="InterPro" id="IPR054406">
    <property type="entry name" value="Mre11_acc_DNA_cap"/>
</dbReference>
<dbReference type="InterPro" id="IPR054045">
    <property type="entry name" value="Mre11_C"/>
</dbReference>
<dbReference type="InterPro" id="IPR041796">
    <property type="entry name" value="Mre11_N"/>
</dbReference>
<dbReference type="InterPro" id="IPR004593">
    <property type="entry name" value="SbcD"/>
</dbReference>
<dbReference type="NCBIfam" id="TIGR00619">
    <property type="entry name" value="sbcd"/>
    <property type="match status" value="1"/>
</dbReference>
<dbReference type="PANTHER" id="PTHR30337">
    <property type="entry name" value="COMPONENT OF ATP-DEPENDENT DSDNA EXONUCLEASE"/>
    <property type="match status" value="1"/>
</dbReference>
<dbReference type="PANTHER" id="PTHR30337:SF0">
    <property type="entry name" value="NUCLEASE SBCCD SUBUNIT D"/>
    <property type="match status" value="1"/>
</dbReference>
<dbReference type="Pfam" id="PF00149">
    <property type="entry name" value="Metallophos"/>
    <property type="match status" value="1"/>
</dbReference>
<dbReference type="Pfam" id="PF22155">
    <property type="entry name" value="Mre11_acc_DNA_cap"/>
    <property type="match status" value="1"/>
</dbReference>
<dbReference type="Pfam" id="PF22161">
    <property type="entry name" value="Mre11_C_bact"/>
    <property type="match status" value="1"/>
</dbReference>
<dbReference type="SUPFAM" id="SSF56300">
    <property type="entry name" value="Metallo-dependent phosphatases"/>
    <property type="match status" value="1"/>
</dbReference>
<evidence type="ECO:0000250" key="1">
    <source>
        <dbReference type="UniProtKB" id="Q8U1N9"/>
    </source>
</evidence>
<evidence type="ECO:0000255" key="2">
    <source>
        <dbReference type="HAMAP-Rule" id="MF_02044"/>
    </source>
</evidence>
<evidence type="ECO:0000269" key="3">
    <source>
    </source>
</evidence>
<evidence type="ECO:0000269" key="4">
    <source>
    </source>
</evidence>
<evidence type="ECO:0000269" key="5">
    <source>
    </source>
</evidence>
<evidence type="ECO:0000269" key="6">
    <source>
    </source>
</evidence>
<evidence type="ECO:0000303" key="7">
    <source>
    </source>
</evidence>
<evidence type="ECO:0000305" key="8"/>
<evidence type="ECO:0000305" key="9">
    <source>
    </source>
</evidence>
<evidence type="ECO:0000312" key="10">
    <source>
        <dbReference type="EMBL" id="AAD36702.1"/>
    </source>
</evidence>
<evidence type="ECO:0007744" key="11">
    <source>
        <dbReference type="PDB" id="2Q8U"/>
    </source>
</evidence>
<evidence type="ECO:0007744" key="12">
    <source>
        <dbReference type="PDB" id="3QF7"/>
    </source>
</evidence>
<evidence type="ECO:0007744" key="13">
    <source>
        <dbReference type="PDB" id="3QG5"/>
    </source>
</evidence>
<evidence type="ECO:0007744" key="14">
    <source>
        <dbReference type="PDB" id="3THN"/>
    </source>
</evidence>
<evidence type="ECO:0007744" key="15">
    <source>
        <dbReference type="PDB" id="3THO"/>
    </source>
</evidence>
<evidence type="ECO:0007744" key="16">
    <source>
        <dbReference type="PDB" id="4NZV"/>
    </source>
</evidence>
<evidence type="ECO:0007744" key="17">
    <source>
        <dbReference type="PDB" id="4O24"/>
    </source>
</evidence>
<evidence type="ECO:0007744" key="18">
    <source>
        <dbReference type="PDB" id="4O43"/>
    </source>
</evidence>
<evidence type="ECO:0007744" key="19">
    <source>
        <dbReference type="PDB" id="4O4K"/>
    </source>
</evidence>
<evidence type="ECO:0007744" key="20">
    <source>
        <dbReference type="PDB" id="4O5G"/>
    </source>
</evidence>
<evidence type="ECO:0007744" key="21">
    <source>
        <dbReference type="PDB" id="4W9M"/>
    </source>
</evidence>
<evidence type="ECO:0007829" key="22">
    <source>
        <dbReference type="PDB" id="3QF7"/>
    </source>
</evidence>
<evidence type="ECO:0007829" key="23">
    <source>
        <dbReference type="PDB" id="3THO"/>
    </source>
</evidence>
<evidence type="ECO:0007829" key="24">
    <source>
        <dbReference type="PDB" id="4NZV"/>
    </source>
</evidence>
<evidence type="ECO:0007829" key="25">
    <source>
        <dbReference type="PDB" id="4O4K"/>
    </source>
</evidence>
<evidence type="ECO:0007829" key="26">
    <source>
        <dbReference type="PDB" id="6X1Z"/>
    </source>
</evidence>
<gene>
    <name evidence="7" type="primary">mre11</name>
    <name evidence="10" type="ordered locus">TM_1635</name>
</gene>